<feature type="chain" id="PRO_0000436913" description="Diglucosylglycerate octanoyltransferase">
    <location>
        <begin position="1"/>
        <end position="247"/>
    </location>
</feature>
<evidence type="ECO:0000250" key="1">
    <source>
        <dbReference type="UniProtKB" id="K5BJH8"/>
    </source>
</evidence>
<evidence type="ECO:0000269" key="2">
    <source>
    </source>
</evidence>
<evidence type="ECO:0000303" key="3">
    <source>
    </source>
</evidence>
<evidence type="ECO:0000305" key="4"/>
<evidence type="ECO:0000305" key="5">
    <source>
    </source>
</evidence>
<evidence type="ECO:0000312" key="6">
    <source>
        <dbReference type="EMBL" id="CCP45209.1"/>
    </source>
</evidence>
<organism>
    <name type="scientific">Mycobacterium tuberculosis (strain ATCC 25618 / H37Rv)</name>
    <dbReference type="NCBI Taxonomy" id="83332"/>
    <lineage>
        <taxon>Bacteria</taxon>
        <taxon>Bacillati</taxon>
        <taxon>Actinomycetota</taxon>
        <taxon>Actinomycetes</taxon>
        <taxon>Mycobacteriales</taxon>
        <taxon>Mycobacteriaceae</taxon>
        <taxon>Mycobacterium</taxon>
        <taxon>Mycobacterium tuberculosis complex</taxon>
    </lineage>
</organism>
<name>OCTT_MYCTU</name>
<dbReference type="EC" id="2.3.1.273" evidence="1"/>
<dbReference type="EMBL" id="AL123456">
    <property type="protein sequence ID" value="CCP45209.1"/>
    <property type="molecule type" value="Genomic_DNA"/>
</dbReference>
<dbReference type="RefSeq" id="NP_216934.1">
    <property type="nucleotide sequence ID" value="NC_000962.3"/>
</dbReference>
<dbReference type="RefSeq" id="WP_003412384.1">
    <property type="nucleotide sequence ID" value="NZ_NVQJ01000054.1"/>
</dbReference>
<dbReference type="STRING" id="83332.Rv2418c"/>
<dbReference type="PaxDb" id="83332-Rv2418c"/>
<dbReference type="GeneID" id="45426405"/>
<dbReference type="GeneID" id="885304"/>
<dbReference type="KEGG" id="mtu:Rv2418c"/>
<dbReference type="KEGG" id="mtv:RVBD_2418c"/>
<dbReference type="PATRIC" id="fig|83332.111.peg.2703"/>
<dbReference type="TubercuList" id="Rv2418c"/>
<dbReference type="eggNOG" id="COG2755">
    <property type="taxonomic scope" value="Bacteria"/>
</dbReference>
<dbReference type="HOGENOM" id="CLU_1106189_0_0_11"/>
<dbReference type="InParanoid" id="P71725"/>
<dbReference type="OrthoDB" id="4369943at2"/>
<dbReference type="BRENDA" id="2.3.1.273">
    <property type="organism ID" value="3445"/>
</dbReference>
<dbReference type="Proteomes" id="UP000001584">
    <property type="component" value="Chromosome"/>
</dbReference>
<dbReference type="GO" id="GO:0005886">
    <property type="term" value="C:plasma membrane"/>
    <property type="evidence" value="ECO:0007005"/>
    <property type="project" value="MTBBASE"/>
</dbReference>
<dbReference type="GO" id="GO:0016414">
    <property type="term" value="F:diglucosylglycerate octanoyltransferase activity"/>
    <property type="evidence" value="ECO:0000250"/>
    <property type="project" value="UniProtKB"/>
</dbReference>
<dbReference type="GO" id="GO:0051262">
    <property type="term" value="P:protein tetramerization"/>
    <property type="evidence" value="ECO:0000314"/>
    <property type="project" value="UniProtKB"/>
</dbReference>
<dbReference type="CDD" id="cd00229">
    <property type="entry name" value="SGNH_hydrolase"/>
    <property type="match status" value="1"/>
</dbReference>
<dbReference type="Gene3D" id="3.40.50.1110">
    <property type="entry name" value="SGNH hydrolase"/>
    <property type="match status" value="1"/>
</dbReference>
<dbReference type="InterPro" id="IPR050023">
    <property type="entry name" value="OctT"/>
</dbReference>
<dbReference type="InterPro" id="IPR036514">
    <property type="entry name" value="SGNH_hydro_sf"/>
</dbReference>
<dbReference type="NCBIfam" id="NF043016">
    <property type="entry name" value="DigluglyOctase"/>
    <property type="match status" value="1"/>
</dbReference>
<dbReference type="SUPFAM" id="SSF52266">
    <property type="entry name" value="SGNH hydrolase"/>
    <property type="match status" value="1"/>
</dbReference>
<gene>
    <name evidence="3" type="primary">octT</name>
    <name evidence="6" type="ordered locus">Rv2418c</name>
</gene>
<protein>
    <recommendedName>
        <fullName evidence="3">Diglucosylglycerate octanoyltransferase</fullName>
        <shortName evidence="3">DGG octanoyltransferase</shortName>
        <ecNumber evidence="1">2.3.1.273</ecNumber>
    </recommendedName>
</protein>
<accession>P71725</accession>
<accession>F2GI29</accession>
<accession>I6Y0P0</accession>
<accession>Q7D765</accession>
<sequence>MSSRRGRRPALLVFADSLAYYGPTGGLPADDPRIWPNIVASQLDWDLELIGRIGWTCRDVWWAATQDPRAWAALPRAGAVIFATGGMDSLPSVLPTALRELIRYVRPSWLRRWVRDGYAWVQPRLSPVARAALPPHLTAEYLEKTRGAIDFNRPGIPIIASLPSVHIAETYGKAHHGRAGTVAAITEWAQHHDIPLVDLKAAVAEQILSGYGNRDGIHWNFEAHQAVAELMLKALAEAGVPNEKSRG</sequence>
<proteinExistence type="evidence at protein level"/>
<keyword id="KW-0012">Acyltransferase</keyword>
<keyword id="KW-1185">Reference proteome</keyword>
<keyword id="KW-0808">Transferase</keyword>
<reference key="1">
    <citation type="journal article" date="1998" name="Nature">
        <title>Deciphering the biology of Mycobacterium tuberculosis from the complete genome sequence.</title>
        <authorList>
            <person name="Cole S.T."/>
            <person name="Brosch R."/>
            <person name="Parkhill J."/>
            <person name="Garnier T."/>
            <person name="Churcher C.M."/>
            <person name="Harris D.E."/>
            <person name="Gordon S.V."/>
            <person name="Eiglmeier K."/>
            <person name="Gas S."/>
            <person name="Barry C.E. III"/>
            <person name="Tekaia F."/>
            <person name="Badcock K."/>
            <person name="Basham D."/>
            <person name="Brown D."/>
            <person name="Chillingworth T."/>
            <person name="Connor R."/>
            <person name="Davies R.M."/>
            <person name="Devlin K."/>
            <person name="Feltwell T."/>
            <person name="Gentles S."/>
            <person name="Hamlin N."/>
            <person name="Holroyd S."/>
            <person name="Hornsby T."/>
            <person name="Jagels K."/>
            <person name="Krogh A."/>
            <person name="McLean J."/>
            <person name="Moule S."/>
            <person name="Murphy L.D."/>
            <person name="Oliver S."/>
            <person name="Osborne J."/>
            <person name="Quail M.A."/>
            <person name="Rajandream M.A."/>
            <person name="Rogers J."/>
            <person name="Rutter S."/>
            <person name="Seeger K."/>
            <person name="Skelton S."/>
            <person name="Squares S."/>
            <person name="Squares R."/>
            <person name="Sulston J.E."/>
            <person name="Taylor K."/>
            <person name="Whitehead S."/>
            <person name="Barrell B.G."/>
        </authorList>
    </citation>
    <scope>NUCLEOTIDE SEQUENCE [LARGE SCALE GENOMIC DNA]</scope>
    <source>
        <strain>ATCC 25618 / H37Rv</strain>
    </source>
</reference>
<reference key="2">
    <citation type="journal article" date="2011" name="Mol. Cell. Proteomics">
        <title>Proteogenomic analysis of Mycobacterium tuberculosis by high resolution mass spectrometry.</title>
        <authorList>
            <person name="Kelkar D.S."/>
            <person name="Kumar D."/>
            <person name="Kumar P."/>
            <person name="Balakrishnan L."/>
            <person name="Muthusamy B."/>
            <person name="Yadav A.K."/>
            <person name="Shrivastava P."/>
            <person name="Marimuthu A."/>
            <person name="Anand S."/>
            <person name="Sundaram H."/>
            <person name="Kingsbury R."/>
            <person name="Harsha H.C."/>
            <person name="Nair B."/>
            <person name="Prasad T.S."/>
            <person name="Chauhan D.S."/>
            <person name="Katoch K."/>
            <person name="Katoch V.M."/>
            <person name="Kumar P."/>
            <person name="Chaerkady R."/>
            <person name="Ramachandran S."/>
            <person name="Dash D."/>
            <person name="Pandey A."/>
        </authorList>
    </citation>
    <scope>IDENTIFICATION BY MASS SPECTROMETRY [LARGE SCALE ANALYSIS]</scope>
    <source>
        <strain>ATCC 25618 / H37Rv</strain>
    </source>
</reference>
<reference key="3">
    <citation type="journal article" date="2015" name="Sci. Rep.">
        <title>Octanoylation of early intermediates of mycobacterial methylglucose lipopolysaccharides.</title>
        <authorList>
            <person name="Maranha A."/>
            <person name="Moynihan P.J."/>
            <person name="Miranda V."/>
            <person name="Correia Lourenco E."/>
            <person name="Nunes-Costa D."/>
            <person name="Fraga J.S."/>
            <person name="Jose Barbosa Pereira P."/>
            <person name="Macedo-Ribeiro S."/>
            <person name="Ventura M.R."/>
            <person name="Clarke A.J."/>
            <person name="Empadinhas N."/>
        </authorList>
    </citation>
    <scope>FUNCTION</scope>
    <scope>SUBUNIT</scope>
    <source>
        <strain>H37Rv</strain>
    </source>
</reference>
<comment type="function">
    <text evidence="1 5">Sugar octanoyltransferase likely involved in the biosynthesis of mycobacterial methylglucose lipopolysaccharide (MGLP). Catalyzes the transfer of an octanoyl group from octanoyl-CoA to the C6 OH of the second glucose in diglucosylglycerate (DGG). DGG is the preferred acceptor, but to a lesser extent, GG (glucosylglycerate) can also be used as substrate. DGG and GG are the two earliest intermediates in MGLP biosynthesis.</text>
</comment>
<comment type="catalytic activity">
    <reaction evidence="1">
        <text>(2R)-2-O-[alpha-D-glucopyranosyl-(1-&gt;6)-alpha-D-glucopyranosyl]-glycerate + octanoyl-CoA = (2R)-2-O-[6-O-octanoyl-alpha-D-glucopyranosyl-(1-&gt;6)-alpha-D-glucopyranosyl]-glycerate + CoA</text>
        <dbReference type="Rhea" id="RHEA:56868"/>
        <dbReference type="ChEBI" id="CHEBI:57287"/>
        <dbReference type="ChEBI" id="CHEBI:57386"/>
        <dbReference type="ChEBI" id="CHEBI:141056"/>
        <dbReference type="ChEBI" id="CHEBI:141058"/>
        <dbReference type="EC" id="2.3.1.273"/>
    </reaction>
</comment>
<comment type="subunit">
    <text evidence="2">Homotetramer.</text>
</comment>
<comment type="similarity">
    <text evidence="4">Belongs to the OctT acyltransferase family.</text>
</comment>